<organism>
    <name type="scientific">Staphylococcus aureus (strain N315)</name>
    <dbReference type="NCBI Taxonomy" id="158879"/>
    <lineage>
        <taxon>Bacteria</taxon>
        <taxon>Bacillati</taxon>
        <taxon>Bacillota</taxon>
        <taxon>Bacilli</taxon>
        <taxon>Bacillales</taxon>
        <taxon>Staphylococcaceae</taxon>
        <taxon>Staphylococcus</taxon>
    </lineage>
</organism>
<proteinExistence type="evidence at protein level"/>
<accession>P99075</accession>
<accession>Q99SD3</accession>
<evidence type="ECO:0000250" key="1"/>
<evidence type="ECO:0000305" key="2"/>
<keyword id="KW-0324">Glycolysis</keyword>
<keyword id="KW-0456">Lyase</keyword>
<keyword id="KW-0479">Metal-binding</keyword>
<keyword id="KW-0862">Zinc</keyword>
<sequence>MPLVSMKEMLIDAKENGYAVGQYNINNLEFTQAILEASQEENAPVILGVSEGAARYMSGFYTIVKMVEGLMHDLNITIPVAIHLDHGSSFEKCKEAIDAGFTSVMIDASHSPFEENVATTKKVVEYAHEKGVSVEAELGTVGGQEDDVVADGIIYADPKECQELVEKTGIDALAPALGSVHGPYKGEPKLGFKEMEEIGLSTGLPLVLHGGTGIPTKDIQKAIPFGTAKINVNTENQIASAKAVRDVLNNDKEVYDPRKYLGPAREAIKETVKGKIKEFGTSNRAK</sequence>
<comment type="function">
    <text evidence="1">Catalyzes the aldol condensation of dihydroxyacetone phosphate (DHAP or glycerone-phosphate) with glyceraldehyde 3-phosphate (G3P) to form fructose 1,6-bisphosphate (FBP) in gluconeogenesis and the reverse reaction in glycolysis.</text>
</comment>
<comment type="catalytic activity">
    <reaction>
        <text>beta-D-fructose 1,6-bisphosphate = D-glyceraldehyde 3-phosphate + dihydroxyacetone phosphate</text>
        <dbReference type="Rhea" id="RHEA:14729"/>
        <dbReference type="ChEBI" id="CHEBI:32966"/>
        <dbReference type="ChEBI" id="CHEBI:57642"/>
        <dbReference type="ChEBI" id="CHEBI:59776"/>
        <dbReference type="EC" id="4.1.2.13"/>
    </reaction>
</comment>
<comment type="cofactor">
    <cofactor evidence="1">
        <name>Zn(2+)</name>
        <dbReference type="ChEBI" id="CHEBI:29105"/>
    </cofactor>
    <text evidence="1">Binds 2 Zn(2+) ions per subunit. One is catalytic and the other provides a structural contribution.</text>
</comment>
<comment type="pathway">
    <text>Carbohydrate degradation; glycolysis; D-glyceraldehyde 3-phosphate and glycerone phosphate from D-glucose: step 4/4.</text>
</comment>
<comment type="similarity">
    <text evidence="2">Belongs to the class II fructose-bisphosphate aldolase family.</text>
</comment>
<dbReference type="EC" id="4.1.2.13"/>
<dbReference type="EMBL" id="BA000018">
    <property type="protein sequence ID" value="BAB43211.1"/>
    <property type="molecule type" value="Genomic_DNA"/>
</dbReference>
<dbReference type="PIR" id="B90006">
    <property type="entry name" value="B90006"/>
</dbReference>
<dbReference type="SMR" id="P99075"/>
<dbReference type="EnsemblBacteria" id="BAB43211">
    <property type="protein sequence ID" value="BAB43211"/>
    <property type="gene ID" value="BAB43211"/>
</dbReference>
<dbReference type="KEGG" id="sau:SA1927"/>
<dbReference type="HOGENOM" id="CLU_040088_0_1_9"/>
<dbReference type="UniPathway" id="UPA00109">
    <property type="reaction ID" value="UER00183"/>
</dbReference>
<dbReference type="PHI-base" id="PHI:6903"/>
<dbReference type="GO" id="GO:0004332">
    <property type="term" value="F:fructose-bisphosphate aldolase activity"/>
    <property type="evidence" value="ECO:0007669"/>
    <property type="project" value="UniProtKB-EC"/>
</dbReference>
<dbReference type="GO" id="GO:0008270">
    <property type="term" value="F:zinc ion binding"/>
    <property type="evidence" value="ECO:0007669"/>
    <property type="project" value="InterPro"/>
</dbReference>
<dbReference type="GO" id="GO:0030388">
    <property type="term" value="P:fructose 1,6-bisphosphate metabolic process"/>
    <property type="evidence" value="ECO:0007669"/>
    <property type="project" value="InterPro"/>
</dbReference>
<dbReference type="GO" id="GO:0006096">
    <property type="term" value="P:glycolytic process"/>
    <property type="evidence" value="ECO:0007669"/>
    <property type="project" value="UniProtKB-UniPathway"/>
</dbReference>
<dbReference type="CDD" id="cd00947">
    <property type="entry name" value="TBP_aldolase_IIB"/>
    <property type="match status" value="1"/>
</dbReference>
<dbReference type="Gene3D" id="3.20.20.70">
    <property type="entry name" value="Aldolase class I"/>
    <property type="match status" value="1"/>
</dbReference>
<dbReference type="InterPro" id="IPR013785">
    <property type="entry name" value="Aldolase_TIM"/>
</dbReference>
<dbReference type="InterPro" id="IPR050246">
    <property type="entry name" value="Class_II_FBP_aldolase"/>
</dbReference>
<dbReference type="InterPro" id="IPR000771">
    <property type="entry name" value="FBA_II"/>
</dbReference>
<dbReference type="InterPro" id="IPR011289">
    <property type="entry name" value="Fruc_bis_ald_class-2"/>
</dbReference>
<dbReference type="NCBIfam" id="TIGR00167">
    <property type="entry name" value="cbbA"/>
    <property type="match status" value="1"/>
</dbReference>
<dbReference type="NCBIfam" id="TIGR01859">
    <property type="entry name" value="fruc_bis_ald"/>
    <property type="match status" value="1"/>
</dbReference>
<dbReference type="NCBIfam" id="NF006376">
    <property type="entry name" value="PRK08610.1"/>
    <property type="match status" value="1"/>
</dbReference>
<dbReference type="PANTHER" id="PTHR30304">
    <property type="entry name" value="D-TAGATOSE-1,6-BISPHOSPHATE ALDOLASE"/>
    <property type="match status" value="1"/>
</dbReference>
<dbReference type="PANTHER" id="PTHR30304:SF0">
    <property type="entry name" value="D-TAGATOSE-1,6-BISPHOSPHATE ALDOLASE SUBUNIT GATY-RELATED"/>
    <property type="match status" value="1"/>
</dbReference>
<dbReference type="Pfam" id="PF01116">
    <property type="entry name" value="F_bP_aldolase"/>
    <property type="match status" value="1"/>
</dbReference>
<dbReference type="PIRSF" id="PIRSF001359">
    <property type="entry name" value="F_bP_aldolase_II"/>
    <property type="match status" value="1"/>
</dbReference>
<dbReference type="SUPFAM" id="SSF51569">
    <property type="entry name" value="Aldolase"/>
    <property type="match status" value="1"/>
</dbReference>
<dbReference type="PROSITE" id="PS00806">
    <property type="entry name" value="ALDOLASE_CLASS_II_2"/>
    <property type="match status" value="1"/>
</dbReference>
<name>ALF2_STAAN</name>
<feature type="chain" id="PRO_0000178737" description="Fructose-bisphosphate aldolase">
    <location>
        <begin position="1"/>
        <end position="286"/>
    </location>
</feature>
<feature type="active site" description="Proton donor" evidence="1">
    <location>
        <position position="85"/>
    </location>
</feature>
<feature type="binding site" evidence="1">
    <location>
        <position position="50"/>
    </location>
    <ligand>
        <name>D-glyceraldehyde 3-phosphate</name>
        <dbReference type="ChEBI" id="CHEBI:59776"/>
    </ligand>
</feature>
<feature type="binding site" evidence="1">
    <location>
        <position position="86"/>
    </location>
    <ligand>
        <name>Zn(2+)</name>
        <dbReference type="ChEBI" id="CHEBI:29105"/>
        <label>1</label>
        <note>catalytic</note>
    </ligand>
</feature>
<feature type="binding site" evidence="1">
    <location>
        <position position="107"/>
    </location>
    <ligand>
        <name>Zn(2+)</name>
        <dbReference type="ChEBI" id="CHEBI:29105"/>
        <label>2</label>
    </ligand>
</feature>
<feature type="binding site" evidence="1">
    <location>
        <position position="137"/>
    </location>
    <ligand>
        <name>Zn(2+)</name>
        <dbReference type="ChEBI" id="CHEBI:29105"/>
        <label>2</label>
    </ligand>
</feature>
<feature type="binding site" evidence="1">
    <location>
        <position position="181"/>
    </location>
    <ligand>
        <name>Zn(2+)</name>
        <dbReference type="ChEBI" id="CHEBI:29105"/>
        <label>1</label>
        <note>catalytic</note>
    </ligand>
</feature>
<feature type="binding site" evidence="1">
    <location>
        <position position="182"/>
    </location>
    <ligand>
        <name>dihydroxyacetone phosphate</name>
        <dbReference type="ChEBI" id="CHEBI:57642"/>
    </ligand>
</feature>
<feature type="binding site" evidence="1">
    <location>
        <position position="209"/>
    </location>
    <ligand>
        <name>Zn(2+)</name>
        <dbReference type="ChEBI" id="CHEBI:29105"/>
        <label>1</label>
        <note>catalytic</note>
    </ligand>
</feature>
<feature type="binding site" evidence="1">
    <location>
        <begin position="210"/>
        <end position="212"/>
    </location>
    <ligand>
        <name>dihydroxyacetone phosphate</name>
        <dbReference type="ChEBI" id="CHEBI:57642"/>
    </ligand>
</feature>
<feature type="binding site" evidence="1">
    <location>
        <begin position="231"/>
        <end position="234"/>
    </location>
    <ligand>
        <name>dihydroxyacetone phosphate</name>
        <dbReference type="ChEBI" id="CHEBI:57642"/>
    </ligand>
</feature>
<protein>
    <recommendedName>
        <fullName>Fructose-bisphosphate aldolase</fullName>
        <shortName>FBP aldolase</shortName>
        <shortName>FBPA</shortName>
        <ecNumber>4.1.2.13</ecNumber>
    </recommendedName>
    <alternativeName>
        <fullName>Fructose-1,6-bisphosphate aldolase</fullName>
    </alternativeName>
</protein>
<gene>
    <name type="primary">fba</name>
    <name type="synonym">fbaA</name>
    <name type="ordered locus">SA1927</name>
</gene>
<reference key="1">
    <citation type="journal article" date="2001" name="Lancet">
        <title>Whole genome sequencing of meticillin-resistant Staphylococcus aureus.</title>
        <authorList>
            <person name="Kuroda M."/>
            <person name="Ohta T."/>
            <person name="Uchiyama I."/>
            <person name="Baba T."/>
            <person name="Yuzawa H."/>
            <person name="Kobayashi I."/>
            <person name="Cui L."/>
            <person name="Oguchi A."/>
            <person name="Aoki K."/>
            <person name="Nagai Y."/>
            <person name="Lian J.-Q."/>
            <person name="Ito T."/>
            <person name="Kanamori M."/>
            <person name="Matsumaru H."/>
            <person name="Maruyama A."/>
            <person name="Murakami H."/>
            <person name="Hosoyama A."/>
            <person name="Mizutani-Ui Y."/>
            <person name="Takahashi N.K."/>
            <person name="Sawano T."/>
            <person name="Inoue R."/>
            <person name="Kaito C."/>
            <person name="Sekimizu K."/>
            <person name="Hirakawa H."/>
            <person name="Kuhara S."/>
            <person name="Goto S."/>
            <person name="Yabuzaki J."/>
            <person name="Kanehisa M."/>
            <person name="Yamashita A."/>
            <person name="Oshima K."/>
            <person name="Furuya K."/>
            <person name="Yoshino C."/>
            <person name="Shiba T."/>
            <person name="Hattori M."/>
            <person name="Ogasawara N."/>
            <person name="Hayashi H."/>
            <person name="Hiramatsu K."/>
        </authorList>
    </citation>
    <scope>NUCLEOTIDE SEQUENCE [LARGE SCALE GENOMIC DNA]</scope>
    <source>
        <strain>N315</strain>
    </source>
</reference>
<reference key="2">
    <citation type="journal article" date="2005" name="J. Microbiol. Methods">
        <title>Correlation of proteomic and transcriptomic profiles of Staphylococcus aureus during the post-exponential phase of growth.</title>
        <authorList>
            <person name="Scherl A."/>
            <person name="Francois P."/>
            <person name="Bento M."/>
            <person name="Deshusses J.M."/>
            <person name="Charbonnier Y."/>
            <person name="Converset V."/>
            <person name="Huyghe A."/>
            <person name="Walter N."/>
            <person name="Hoogland C."/>
            <person name="Appel R.D."/>
            <person name="Sanchez J.-C."/>
            <person name="Zimmermann-Ivol C.G."/>
            <person name="Corthals G.L."/>
            <person name="Hochstrasser D.F."/>
            <person name="Schrenzel J."/>
        </authorList>
    </citation>
    <scope>IDENTIFICATION BY MASS SPECTROMETRY</scope>
    <source>
        <strain>N315</strain>
    </source>
</reference>
<reference key="3">
    <citation type="submission" date="2007-10" db="UniProtKB">
        <title>Shotgun proteomic analysis of total and membrane protein extracts of S. aureus strain N315.</title>
        <authorList>
            <person name="Vaezzadeh A.R."/>
            <person name="Deshusses J."/>
            <person name="Lescuyer P."/>
            <person name="Hochstrasser D.F."/>
        </authorList>
    </citation>
    <scope>IDENTIFICATION BY MASS SPECTROMETRY [LARGE SCALE ANALYSIS]</scope>
    <source>
        <strain>N315</strain>
    </source>
</reference>